<proteinExistence type="evidence at protein level"/>
<accession>P13134</accession>
<accession>D6W0V5</accession>
<name>KEX2_YEAST</name>
<keyword id="KW-0002">3D-structure</keyword>
<keyword id="KW-0106">Calcium</keyword>
<keyword id="KW-0165">Cleavage on pair of basic residues</keyword>
<keyword id="KW-1015">Disulfide bond</keyword>
<keyword id="KW-0325">Glycoprotein</keyword>
<keyword id="KW-0333">Golgi apparatus</keyword>
<keyword id="KW-0378">Hydrolase</keyword>
<keyword id="KW-0472">Membrane</keyword>
<keyword id="KW-0479">Metal-binding</keyword>
<keyword id="KW-0645">Protease</keyword>
<keyword id="KW-1185">Reference proteome</keyword>
<keyword id="KW-0720">Serine protease</keyword>
<keyword id="KW-0732">Signal</keyword>
<keyword id="KW-0812">Transmembrane</keyword>
<keyword id="KW-1133">Transmembrane helix</keyword>
<keyword id="KW-0865">Zymogen</keyword>
<reference key="1">
    <citation type="journal article" date="1988" name="Biochem. Biophys. Res. Commun.">
        <title>Yeast KEX2 genes encodes an endopeptidase homologous to subtilisin-like serine proteases.</title>
        <authorList>
            <person name="Mizuno K."/>
            <person name="Nakamura T."/>
            <person name="Ohshima T."/>
            <person name="Tanaka S."/>
            <person name="Matsuo H."/>
        </authorList>
    </citation>
    <scope>NUCLEOTIDE SEQUENCE [GENOMIC DNA]</scope>
</reference>
<reference key="2">
    <citation type="journal article" date="1989" name="Proc. Natl. Acad. Sci. U.S.A.">
        <title>Yeast prohormone processing enzyme (KEX2 gene product) is a Ca2+-dependent serine protease.</title>
        <authorList>
            <person name="Fuller R.S."/>
            <person name="Brake A."/>
            <person name="Thorner J."/>
        </authorList>
    </citation>
    <scope>NUCLEOTIDE SEQUENCE [GENOMIC DNA]</scope>
</reference>
<reference key="3">
    <citation type="journal article" date="1996" name="Yeast">
        <title>The DNA sequence of cosmid 14-5 from chromosome XIV reveals 21 open reading frames including a novel gene encoding a globin-like domain.</title>
        <authorList>
            <person name="Pandolfo D."/>
            <person name="de Antoni A."/>
            <person name="Lanfranchi G."/>
            <person name="Valle G."/>
        </authorList>
    </citation>
    <scope>NUCLEOTIDE SEQUENCE [GENOMIC DNA]</scope>
</reference>
<reference key="4">
    <citation type="journal article" date="1997" name="Nature">
        <title>The nucleotide sequence of Saccharomyces cerevisiae chromosome XIV and its evolutionary implications.</title>
        <authorList>
            <person name="Philippsen P."/>
            <person name="Kleine K."/>
            <person name="Poehlmann R."/>
            <person name="Duesterhoeft A."/>
            <person name="Hamberg K."/>
            <person name="Hegemann J.H."/>
            <person name="Obermaier B."/>
            <person name="Urrestarazu L.A."/>
            <person name="Aert R."/>
            <person name="Albermann K."/>
            <person name="Altmann R."/>
            <person name="Andre B."/>
            <person name="Baladron V."/>
            <person name="Ballesta J.P.G."/>
            <person name="Becam A.-M."/>
            <person name="Beinhauer J.D."/>
            <person name="Boskovic J."/>
            <person name="Buitrago M.J."/>
            <person name="Bussereau F."/>
            <person name="Coster F."/>
            <person name="Crouzet M."/>
            <person name="D'Angelo M."/>
            <person name="Dal Pero F."/>
            <person name="De Antoni A."/>
            <person name="del Rey F."/>
            <person name="Doignon F."/>
            <person name="Domdey H."/>
            <person name="Dubois E."/>
            <person name="Fiedler T.A."/>
            <person name="Fleig U."/>
            <person name="Floeth M."/>
            <person name="Fritz C."/>
            <person name="Gaillardin C."/>
            <person name="Garcia-Cantalejo J.M."/>
            <person name="Glansdorff N."/>
            <person name="Goffeau A."/>
            <person name="Gueldener U."/>
            <person name="Herbert C.J."/>
            <person name="Heumann K."/>
            <person name="Heuss-Neitzel D."/>
            <person name="Hilbert H."/>
            <person name="Hinni K."/>
            <person name="Iraqui Houssaini I."/>
            <person name="Jacquet M."/>
            <person name="Jimenez A."/>
            <person name="Jonniaux J.-L."/>
            <person name="Karpfinger-Hartl L."/>
            <person name="Lanfranchi G."/>
            <person name="Lepingle A."/>
            <person name="Levesque H."/>
            <person name="Lyck R."/>
            <person name="Maftahi M."/>
            <person name="Mallet L."/>
            <person name="Maurer C.T.C."/>
            <person name="Messenguy F."/>
            <person name="Mewes H.-W."/>
            <person name="Moestl D."/>
            <person name="Nasr F."/>
            <person name="Nicaud J.-M."/>
            <person name="Niedenthal R.K."/>
            <person name="Pandolfo D."/>
            <person name="Pierard A."/>
            <person name="Piravandi E."/>
            <person name="Planta R.J."/>
            <person name="Pohl T.M."/>
            <person name="Purnelle B."/>
            <person name="Rebischung C."/>
            <person name="Remacha M.A."/>
            <person name="Revuelta J.L."/>
            <person name="Rinke M."/>
            <person name="Saiz J.E."/>
            <person name="Sartorello F."/>
            <person name="Scherens B."/>
            <person name="Sen-Gupta M."/>
            <person name="Soler-Mira A."/>
            <person name="Urbanus J.H.M."/>
            <person name="Valle G."/>
            <person name="Van Dyck L."/>
            <person name="Verhasselt P."/>
            <person name="Vierendeels F."/>
            <person name="Vissers S."/>
            <person name="Voet M."/>
            <person name="Volckaert G."/>
            <person name="Wach A."/>
            <person name="Wambutt R."/>
            <person name="Wedler H."/>
            <person name="Zollner A."/>
            <person name="Hani J."/>
        </authorList>
    </citation>
    <scope>NUCLEOTIDE SEQUENCE [LARGE SCALE GENOMIC DNA]</scope>
    <source>
        <strain>ATCC 204508 / S288c</strain>
    </source>
</reference>
<reference key="5">
    <citation type="journal article" date="2014" name="G3 (Bethesda)">
        <title>The reference genome sequence of Saccharomyces cerevisiae: Then and now.</title>
        <authorList>
            <person name="Engel S.R."/>
            <person name="Dietrich F.S."/>
            <person name="Fisk D.G."/>
            <person name="Binkley G."/>
            <person name="Balakrishnan R."/>
            <person name="Costanzo M.C."/>
            <person name="Dwight S.S."/>
            <person name="Hitz B.C."/>
            <person name="Karra K."/>
            <person name="Nash R.S."/>
            <person name="Weng S."/>
            <person name="Wong E.D."/>
            <person name="Lloyd P."/>
            <person name="Skrzypek M.S."/>
            <person name="Miyasato S.R."/>
            <person name="Simison M."/>
            <person name="Cherry J.M."/>
        </authorList>
    </citation>
    <scope>GENOME REANNOTATION</scope>
    <source>
        <strain>ATCC 204508 / S288c</strain>
    </source>
</reference>
<reference key="6">
    <citation type="journal article" date="1992" name="Proc. Natl. Acad. Sci. U.S.A.">
        <title>Structural and enzymatic characterization of a purified prohormone-processing enzyme: secreted, soluble Kex2 protease.</title>
        <authorList>
            <person name="Brenner C."/>
            <person name="Fuller R.S."/>
        </authorList>
    </citation>
    <scope>PROTEOLYTIC PROCESSING</scope>
    <scope>CHARACTERIZATION</scope>
</reference>
<reference key="7">
    <citation type="journal article" date="1992" name="FEBS Lett.">
        <title>The pro-region of the Kex2 endoprotease of Saccharomyces cerevisiae is removed by self-processing.</title>
        <authorList>
            <person name="Germain D."/>
            <person name="Dumas F."/>
            <person name="Vernet T."/>
            <person name="Bourbonnais Y."/>
            <person name="Thomas D.Y."/>
            <person name="Boileau G."/>
        </authorList>
    </citation>
    <scope>PROTEOLYTIC PROCESSING</scope>
</reference>
<reference key="8">
    <citation type="journal article" date="1991" name="J. Cell Biol.">
        <title>Posttranslational processing of the prohormone-cleaving Kex2 protease in the Saccharomyces cerevisiae secretory pathway.</title>
        <authorList>
            <person name="Wilcox C.A."/>
            <person name="Fuller R.S."/>
        </authorList>
    </citation>
    <scope>POST-TRANSLATIONAL MODIFICATIONS</scope>
</reference>
<reference key="9">
    <citation type="journal article" date="2003" name="Biochemistry">
        <title>2.4 A resolution crystal structure of the prototypical hormone-processing protease Kex2 in complex with an Ala-Lys-Arg boronic acid inhibitor.</title>
        <authorList>
            <person name="Holyoak T."/>
            <person name="Wilson M.A."/>
            <person name="Fenn T.D."/>
            <person name="Kettner C.A."/>
            <person name="Petsko G.A."/>
            <person name="Fuller R.S."/>
            <person name="Ringe D."/>
        </authorList>
    </citation>
    <scope>X-RAY CRYSTALLOGRAPHY (2.4 ANGSTROMS) OF 123-599 IN COMPLEX WITH INHIBITOR</scope>
</reference>
<feature type="signal peptide" evidence="1">
    <location>
        <begin position="1"/>
        <end position="19"/>
    </location>
</feature>
<feature type="propeptide" id="PRO_0000027043">
    <location>
        <begin position="20"/>
        <end position="109"/>
    </location>
</feature>
<feature type="propeptide" id="PRO_0000027044" description="Removed by dipeptidylpeptidase STE13">
    <location>
        <begin position="110"/>
        <end position="113"/>
    </location>
</feature>
<feature type="chain" id="PRO_0000027045" description="Kexin">
    <location>
        <begin position="114"/>
        <end position="814"/>
    </location>
</feature>
<feature type="topological domain" description="Lumenal" evidence="1">
    <location>
        <begin position="114"/>
        <end position="678"/>
    </location>
</feature>
<feature type="transmembrane region" description="Helical" evidence="1">
    <location>
        <begin position="679"/>
        <end position="699"/>
    </location>
</feature>
<feature type="topological domain" description="Cytoplasmic" evidence="1">
    <location>
        <begin position="700"/>
        <end position="814"/>
    </location>
</feature>
<feature type="domain" description="Peptidase S8" evidence="3">
    <location>
        <begin position="141"/>
        <end position="453"/>
    </location>
</feature>
<feature type="domain" description="P/Homo B" evidence="2">
    <location>
        <begin position="462"/>
        <end position="596"/>
    </location>
</feature>
<feature type="region of interest" description="Disordered" evidence="4">
    <location>
        <begin position="651"/>
        <end position="671"/>
    </location>
</feature>
<feature type="region of interest" description="Disordered" evidence="4">
    <location>
        <begin position="756"/>
        <end position="814"/>
    </location>
</feature>
<feature type="compositionally biased region" description="Low complexity" evidence="4">
    <location>
        <begin position="653"/>
        <end position="667"/>
    </location>
</feature>
<feature type="compositionally biased region" description="Polar residues" evidence="4">
    <location>
        <begin position="792"/>
        <end position="801"/>
    </location>
</feature>
<feature type="active site" description="Charge relay system" evidence="3">
    <location>
        <position position="175"/>
    </location>
</feature>
<feature type="active site" description="Charge relay system" evidence="3">
    <location>
        <position position="213"/>
    </location>
</feature>
<feature type="active site" description="Charge relay system" evidence="3">
    <location>
        <position position="385"/>
    </location>
</feature>
<feature type="binding site">
    <location>
        <position position="135"/>
    </location>
    <ligand>
        <name>Ca(2+)</name>
        <dbReference type="ChEBI" id="CHEBI:29108"/>
        <label>1</label>
    </ligand>
</feature>
<feature type="binding site">
    <location>
        <position position="184"/>
    </location>
    <ligand>
        <name>Ca(2+)</name>
        <dbReference type="ChEBI" id="CHEBI:29108"/>
        <label>1</label>
    </ligand>
</feature>
<feature type="binding site">
    <location>
        <position position="227"/>
    </location>
    <ligand>
        <name>Ca(2+)</name>
        <dbReference type="ChEBI" id="CHEBI:29108"/>
        <label>1</label>
    </ligand>
</feature>
<feature type="binding site">
    <location>
        <position position="277"/>
    </location>
    <ligand>
        <name>Ca(2+)</name>
        <dbReference type="ChEBI" id="CHEBI:29108"/>
        <label>2</label>
    </ligand>
</feature>
<feature type="binding site">
    <location>
        <position position="320"/>
    </location>
    <ligand>
        <name>Ca(2+)</name>
        <dbReference type="ChEBI" id="CHEBI:29108"/>
        <label>2</label>
    </ligand>
</feature>
<feature type="binding site">
    <location>
        <position position="350"/>
    </location>
    <ligand>
        <name>Ca(2+)</name>
        <dbReference type="ChEBI" id="CHEBI:29108"/>
        <label>2</label>
    </ligand>
</feature>
<feature type="glycosylation site" description="N-linked (GlcNAc...) asparagine" evidence="1">
    <location>
        <position position="42"/>
    </location>
</feature>
<feature type="glycosylation site" description="N-linked (GlcNAc...) asparagine">
    <location>
        <position position="163"/>
    </location>
</feature>
<feature type="glycosylation site" description="N-linked (GlcNAc...) asparagine" evidence="1">
    <location>
        <position position="404"/>
    </location>
</feature>
<feature type="glycosylation site" description="N-linked (GlcNAc...) asparagine">
    <location>
        <position position="480"/>
    </location>
</feature>
<feature type="disulfide bond">
    <location>
        <begin position="230"/>
        <end position="377"/>
    </location>
</feature>
<feature type="disulfide bond">
    <location>
        <begin position="322"/>
        <end position="352"/>
    </location>
</feature>
<feature type="helix" evidence="7">
    <location>
        <begin position="123"/>
        <end position="130"/>
    </location>
</feature>
<feature type="helix" evidence="7">
    <location>
        <begin position="138"/>
        <end position="140"/>
    </location>
</feature>
<feature type="turn" evidence="7">
    <location>
        <begin position="142"/>
        <end position="144"/>
    </location>
</feature>
<feature type="strand" evidence="7">
    <location>
        <begin position="147"/>
        <end position="149"/>
    </location>
</feature>
<feature type="helix" evidence="7">
    <location>
        <begin position="157"/>
        <end position="161"/>
    </location>
</feature>
<feature type="strand" evidence="7">
    <location>
        <begin position="170"/>
        <end position="176"/>
    </location>
</feature>
<feature type="turn" evidence="7">
    <location>
        <begin position="183"/>
        <end position="188"/>
    </location>
</feature>
<feature type="helix" evidence="7">
    <location>
        <begin position="191"/>
        <end position="193"/>
    </location>
</feature>
<feature type="turn" evidence="7">
    <location>
        <begin position="197"/>
        <end position="200"/>
    </location>
</feature>
<feature type="turn" evidence="7">
    <location>
        <begin position="209"/>
        <end position="212"/>
    </location>
</feature>
<feature type="helix" evidence="7">
    <location>
        <begin position="213"/>
        <end position="222"/>
    </location>
</feature>
<feature type="strand" evidence="7">
    <location>
        <begin position="225"/>
        <end position="230"/>
    </location>
</feature>
<feature type="turn" evidence="7">
    <location>
        <begin position="234"/>
        <end position="237"/>
    </location>
</feature>
<feature type="strand" evidence="7">
    <location>
        <begin position="238"/>
        <end position="244"/>
    </location>
</feature>
<feature type="strand" evidence="6">
    <location>
        <begin position="246"/>
        <end position="248"/>
    </location>
</feature>
<feature type="helix" evidence="7">
    <location>
        <begin position="252"/>
        <end position="258"/>
    </location>
</feature>
<feature type="turn" evidence="7">
    <location>
        <begin position="259"/>
        <end position="265"/>
    </location>
</feature>
<feature type="strand" evidence="7">
    <location>
        <begin position="267"/>
        <end position="271"/>
    </location>
</feature>
<feature type="strand" evidence="7">
    <location>
        <begin position="278"/>
        <end position="280"/>
    </location>
</feature>
<feature type="helix" evidence="7">
    <location>
        <begin position="287"/>
        <end position="303"/>
    </location>
</feature>
<feature type="strand" evidence="7">
    <location>
        <begin position="307"/>
        <end position="311"/>
    </location>
</feature>
<feature type="helix" evidence="7">
    <location>
        <begin position="316"/>
        <end position="318"/>
    </location>
</feature>
<feature type="helix" evidence="7">
    <location>
        <begin position="322"/>
        <end position="324"/>
    </location>
</feature>
<feature type="turn" evidence="7">
    <location>
        <begin position="326"/>
        <end position="329"/>
    </location>
</feature>
<feature type="strand" evidence="7">
    <location>
        <begin position="333"/>
        <end position="339"/>
    </location>
</feature>
<feature type="strand" evidence="7">
    <location>
        <begin position="355"/>
        <end position="360"/>
    </location>
</feature>
<feature type="strand" evidence="7">
    <location>
        <begin position="368"/>
        <end position="371"/>
    </location>
</feature>
<feature type="strand" evidence="7">
    <location>
        <begin position="377"/>
        <end position="381"/>
    </location>
</feature>
<feature type="helix" evidence="7">
    <location>
        <begin position="384"/>
        <end position="401"/>
    </location>
</feature>
<feature type="helix" evidence="7">
    <location>
        <begin position="407"/>
        <end position="417"/>
    </location>
</feature>
<feature type="helix" evidence="7">
    <location>
        <begin position="425"/>
        <end position="427"/>
    </location>
</feature>
<feature type="strand" evidence="7">
    <location>
        <begin position="433"/>
        <end position="439"/>
    </location>
</feature>
<feature type="turn" evidence="7">
    <location>
        <begin position="440"/>
        <end position="442"/>
    </location>
</feature>
<feature type="helix" evidence="7">
    <location>
        <begin position="449"/>
        <end position="456"/>
    </location>
</feature>
<feature type="strand" evidence="7">
    <location>
        <begin position="465"/>
        <end position="469"/>
    </location>
</feature>
<feature type="strand" evidence="7">
    <location>
        <begin position="477"/>
        <end position="479"/>
    </location>
</feature>
<feature type="strand" evidence="7">
    <location>
        <begin position="486"/>
        <end position="492"/>
    </location>
</feature>
<feature type="helix" evidence="7">
    <location>
        <begin position="494"/>
        <end position="499"/>
    </location>
</feature>
<feature type="strand" evidence="7">
    <location>
        <begin position="502"/>
        <end position="518"/>
    </location>
</feature>
<feature type="helix" evidence="7">
    <location>
        <begin position="519"/>
        <end position="521"/>
    </location>
</feature>
<feature type="strand" evidence="7">
    <location>
        <begin position="522"/>
        <end position="527"/>
    </location>
</feature>
<feature type="strand" evidence="7">
    <location>
        <begin position="533"/>
        <end position="537"/>
    </location>
</feature>
<feature type="strand" evidence="7">
    <location>
        <begin position="549"/>
        <end position="557"/>
    </location>
</feature>
<feature type="turn" evidence="7">
    <location>
        <begin position="558"/>
        <end position="561"/>
    </location>
</feature>
<feature type="strand" evidence="7">
    <location>
        <begin position="566"/>
        <end position="576"/>
    </location>
</feature>
<feature type="strand" evidence="7">
    <location>
        <begin position="581"/>
        <end position="595"/>
    </location>
</feature>
<feature type="helix" evidence="7">
    <location>
        <begin position="597"/>
        <end position="599"/>
    </location>
</feature>
<comment type="function">
    <text>Processing of precursors of alpha-factors and killer toxin.</text>
</comment>
<comment type="catalytic activity">
    <reaction>
        <text>Cleavage of -Lys-Arg-|-Xaa- and -Arg-Arg-|-Xaa- bonds to process yeast alpha-factor pheromone and killer toxin precursors.</text>
        <dbReference type="EC" id="3.4.21.61"/>
    </reaction>
</comment>
<comment type="cofactor">
    <cofactor>
        <name>Ca(2+)</name>
        <dbReference type="ChEBI" id="CHEBI:29108"/>
    </cofactor>
    <text>Binds 3 Ca(2+) ions per subunit.</text>
</comment>
<comment type="interaction">
    <interactant intactId="EBI-9658">
        <id>P13134</id>
    </interactant>
    <interactant intactId="EBI-9653">
        <id>P09620</id>
        <label>KEX1</label>
    </interactant>
    <organismsDiffer>false</organismsDiffer>
    <experiments>3</experiments>
</comment>
<comment type="interaction">
    <interactant intactId="EBI-9658">
        <id>P13134</id>
    </interactant>
    <interactant intactId="EBI-17313">
        <id>P32790</id>
        <label>SLA1</label>
    </interactant>
    <organismsDiffer>false</organismsDiffer>
    <experiments>16</experiments>
</comment>
<comment type="subcellular location">
    <subcellularLocation>
        <location>Golgi apparatus</location>
        <location>trans-Golgi network membrane</location>
        <topology>Single-pass type I membrane protein</topology>
    </subcellularLocation>
</comment>
<comment type="PTM">
    <text>O-glycosylated.</text>
</comment>
<comment type="similarity">
    <text evidence="5">Belongs to the peptidase S8 family. Furin subfamily.</text>
</comment>
<protein>
    <recommendedName>
        <fullName>Kexin</fullName>
        <ecNumber>3.4.21.61</ecNumber>
    </recommendedName>
    <alternativeName>
        <fullName>Protease KEX2</fullName>
    </alternativeName>
    <alternativeName>
        <fullName>Proteinase YSCF</fullName>
    </alternativeName>
</protein>
<dbReference type="EC" id="3.4.21.61"/>
<dbReference type="EMBL" id="M22870">
    <property type="protein sequence ID" value="AAA34719.1"/>
    <property type="molecule type" value="Genomic_DNA"/>
</dbReference>
<dbReference type="EMBL" id="M24201">
    <property type="protein sequence ID" value="AAA34718.1"/>
    <property type="molecule type" value="Genomic_DNA"/>
</dbReference>
<dbReference type="EMBL" id="Z69381">
    <property type="protein sequence ID" value="CAA93360.1"/>
    <property type="molecule type" value="Genomic_DNA"/>
</dbReference>
<dbReference type="EMBL" id="Z71514">
    <property type="protein sequence ID" value="CAA96143.1"/>
    <property type="molecule type" value="Genomic_DNA"/>
</dbReference>
<dbReference type="EMBL" id="BK006947">
    <property type="protein sequence ID" value="DAA10321.1"/>
    <property type="molecule type" value="Genomic_DNA"/>
</dbReference>
<dbReference type="PIR" id="A28931">
    <property type="entry name" value="KXBY"/>
</dbReference>
<dbReference type="RefSeq" id="NP_014161.1">
    <property type="nucleotide sequence ID" value="NM_001183076.1"/>
</dbReference>
<dbReference type="PDB" id="1OT5">
    <property type="method" value="X-ray"/>
    <property type="resolution" value="2.40 A"/>
    <property type="chains" value="A/B=123-599"/>
</dbReference>
<dbReference type="PDB" id="1R64">
    <property type="method" value="X-ray"/>
    <property type="resolution" value="2.20 A"/>
    <property type="chains" value="A/B=121-601"/>
</dbReference>
<dbReference type="PDB" id="2ID4">
    <property type="method" value="X-ray"/>
    <property type="resolution" value="1.90 A"/>
    <property type="chains" value="A/B=114-613"/>
</dbReference>
<dbReference type="PDBsum" id="1OT5"/>
<dbReference type="PDBsum" id="1R64"/>
<dbReference type="PDBsum" id="2ID4"/>
<dbReference type="SMR" id="P13134"/>
<dbReference type="BioGRID" id="35601">
    <property type="interactions" value="243"/>
</dbReference>
<dbReference type="DIP" id="DIP-6287N"/>
<dbReference type="FunCoup" id="P13134">
    <property type="interactions" value="204"/>
</dbReference>
<dbReference type="IntAct" id="P13134">
    <property type="interactions" value="18"/>
</dbReference>
<dbReference type="MINT" id="P13134"/>
<dbReference type="STRING" id="4932.YNL238W"/>
<dbReference type="MEROPS" id="S08.070"/>
<dbReference type="GlyCosmos" id="P13134">
    <property type="glycosylation" value="4 sites, No reported glycans"/>
</dbReference>
<dbReference type="GlyGen" id="P13134">
    <property type="glycosylation" value="4 sites"/>
</dbReference>
<dbReference type="iPTMnet" id="P13134"/>
<dbReference type="PaxDb" id="4932-YNL238W"/>
<dbReference type="PeptideAtlas" id="P13134"/>
<dbReference type="EnsemblFungi" id="YNL238W_mRNA">
    <property type="protein sequence ID" value="YNL238W"/>
    <property type="gene ID" value="YNL238W"/>
</dbReference>
<dbReference type="GeneID" id="855483"/>
<dbReference type="KEGG" id="sce:YNL238W"/>
<dbReference type="AGR" id="SGD:S000005182"/>
<dbReference type="SGD" id="S000005182">
    <property type="gene designation" value="KEX2"/>
</dbReference>
<dbReference type="VEuPathDB" id="FungiDB:YNL238W"/>
<dbReference type="eggNOG" id="KOG3525">
    <property type="taxonomic scope" value="Eukaryota"/>
</dbReference>
<dbReference type="GeneTree" id="ENSGT00940000167869"/>
<dbReference type="HOGENOM" id="CLU_002976_2_1_1"/>
<dbReference type="InParanoid" id="P13134"/>
<dbReference type="OMA" id="AYEFDII"/>
<dbReference type="OrthoDB" id="300641at2759"/>
<dbReference type="BioCyc" id="YEAST:YNL238W-MONOMER"/>
<dbReference type="BRENDA" id="3.4.21.61">
    <property type="organism ID" value="984"/>
</dbReference>
<dbReference type="Reactome" id="R-SCE-2173796">
    <property type="pathway name" value="SMAD2/SMAD3:SMAD4 heterotrimer regulates transcription"/>
</dbReference>
<dbReference type="BioGRID-ORCS" id="855483">
    <property type="hits" value="2 hits in 10 CRISPR screens"/>
</dbReference>
<dbReference type="EvolutionaryTrace" id="P13134"/>
<dbReference type="PRO" id="PR:P13134"/>
<dbReference type="Proteomes" id="UP000002311">
    <property type="component" value="Chromosome XIV"/>
</dbReference>
<dbReference type="RNAct" id="P13134">
    <property type="molecule type" value="protein"/>
</dbReference>
<dbReference type="GO" id="GO:0000324">
    <property type="term" value="C:fungal-type vacuole"/>
    <property type="evidence" value="ECO:0007005"/>
    <property type="project" value="SGD"/>
</dbReference>
<dbReference type="GO" id="GO:0000139">
    <property type="term" value="C:Golgi membrane"/>
    <property type="evidence" value="ECO:0000318"/>
    <property type="project" value="GO_Central"/>
</dbReference>
<dbReference type="GO" id="GO:0005802">
    <property type="term" value="C:trans-Golgi network"/>
    <property type="evidence" value="ECO:0000314"/>
    <property type="project" value="SGD"/>
</dbReference>
<dbReference type="GO" id="GO:0046872">
    <property type="term" value="F:metal ion binding"/>
    <property type="evidence" value="ECO:0007669"/>
    <property type="project" value="UniProtKB-KW"/>
</dbReference>
<dbReference type="GO" id="GO:0004252">
    <property type="term" value="F:serine-type endopeptidase activity"/>
    <property type="evidence" value="ECO:0000314"/>
    <property type="project" value="SGD"/>
</dbReference>
<dbReference type="GO" id="GO:0007323">
    <property type="term" value="P:peptide pheromone maturation"/>
    <property type="evidence" value="ECO:0000315"/>
    <property type="project" value="SGD"/>
</dbReference>
<dbReference type="GO" id="GO:0016485">
    <property type="term" value="P:protein processing"/>
    <property type="evidence" value="ECO:0000318"/>
    <property type="project" value="GO_Central"/>
</dbReference>
<dbReference type="CDD" id="cd04059">
    <property type="entry name" value="Peptidases_S8_Protein_convertases_Kexins_Furin-like"/>
    <property type="match status" value="1"/>
</dbReference>
<dbReference type="FunFam" id="3.40.50.200:FF:000005">
    <property type="entry name" value="Proprotein convertase subtilisin/kexin type 7"/>
    <property type="match status" value="1"/>
</dbReference>
<dbReference type="FunFam" id="2.60.120.260:FF:000026">
    <property type="entry name" value="proprotein convertase subtilisin/kexin type 7"/>
    <property type="match status" value="1"/>
</dbReference>
<dbReference type="Gene3D" id="2.60.120.260">
    <property type="entry name" value="Galactose-binding domain-like"/>
    <property type="match status" value="1"/>
</dbReference>
<dbReference type="Gene3D" id="3.40.50.200">
    <property type="entry name" value="Peptidase S8/S53 domain"/>
    <property type="match status" value="1"/>
</dbReference>
<dbReference type="InterPro" id="IPR008979">
    <property type="entry name" value="Galactose-bd-like_sf"/>
</dbReference>
<dbReference type="InterPro" id="IPR034182">
    <property type="entry name" value="Kexin/furin"/>
</dbReference>
<dbReference type="InterPro" id="IPR002884">
    <property type="entry name" value="P_dom"/>
</dbReference>
<dbReference type="InterPro" id="IPR000209">
    <property type="entry name" value="Peptidase_S8/S53_dom"/>
</dbReference>
<dbReference type="InterPro" id="IPR036852">
    <property type="entry name" value="Peptidase_S8/S53_dom_sf"/>
</dbReference>
<dbReference type="InterPro" id="IPR023827">
    <property type="entry name" value="Peptidase_S8_Asp-AS"/>
</dbReference>
<dbReference type="InterPro" id="IPR022398">
    <property type="entry name" value="Peptidase_S8_His-AS"/>
</dbReference>
<dbReference type="InterPro" id="IPR023828">
    <property type="entry name" value="Peptidase_S8_Ser-AS"/>
</dbReference>
<dbReference type="InterPro" id="IPR015500">
    <property type="entry name" value="Peptidase_S8_subtilisin-rel"/>
</dbReference>
<dbReference type="PANTHER" id="PTHR42884:SF14">
    <property type="entry name" value="NEUROENDOCRINE CONVERTASE 1"/>
    <property type="match status" value="1"/>
</dbReference>
<dbReference type="PANTHER" id="PTHR42884">
    <property type="entry name" value="PROPROTEIN CONVERTASE SUBTILISIN/KEXIN-RELATED"/>
    <property type="match status" value="1"/>
</dbReference>
<dbReference type="Pfam" id="PF01483">
    <property type="entry name" value="P_proprotein"/>
    <property type="match status" value="1"/>
</dbReference>
<dbReference type="Pfam" id="PF00082">
    <property type="entry name" value="Peptidase_S8"/>
    <property type="match status" value="1"/>
</dbReference>
<dbReference type="PRINTS" id="PR00723">
    <property type="entry name" value="SUBTILISIN"/>
</dbReference>
<dbReference type="SUPFAM" id="SSF49785">
    <property type="entry name" value="Galactose-binding domain-like"/>
    <property type="match status" value="1"/>
</dbReference>
<dbReference type="SUPFAM" id="SSF52743">
    <property type="entry name" value="Subtilisin-like"/>
    <property type="match status" value="1"/>
</dbReference>
<dbReference type="PROSITE" id="PS51829">
    <property type="entry name" value="P_HOMO_B"/>
    <property type="match status" value="1"/>
</dbReference>
<dbReference type="PROSITE" id="PS51892">
    <property type="entry name" value="SUBTILASE"/>
    <property type="match status" value="1"/>
</dbReference>
<dbReference type="PROSITE" id="PS00136">
    <property type="entry name" value="SUBTILASE_ASP"/>
    <property type="match status" value="1"/>
</dbReference>
<dbReference type="PROSITE" id="PS00137">
    <property type="entry name" value="SUBTILASE_HIS"/>
    <property type="match status" value="1"/>
</dbReference>
<dbReference type="PROSITE" id="PS00138">
    <property type="entry name" value="SUBTILASE_SER"/>
    <property type="match status" value="1"/>
</dbReference>
<gene>
    <name type="primary">KEX2</name>
    <name type="synonym">QDS1</name>
    <name type="ordered locus">YNL238W</name>
    <name type="ORF">N1122</name>
</gene>
<evidence type="ECO:0000255" key="1"/>
<evidence type="ECO:0000255" key="2">
    <source>
        <dbReference type="PROSITE-ProRule" id="PRU01173"/>
    </source>
</evidence>
<evidence type="ECO:0000255" key="3">
    <source>
        <dbReference type="PROSITE-ProRule" id="PRU01240"/>
    </source>
</evidence>
<evidence type="ECO:0000256" key="4">
    <source>
        <dbReference type="SAM" id="MobiDB-lite"/>
    </source>
</evidence>
<evidence type="ECO:0000305" key="5"/>
<evidence type="ECO:0007829" key="6">
    <source>
        <dbReference type="PDB" id="1R64"/>
    </source>
</evidence>
<evidence type="ECO:0007829" key="7">
    <source>
        <dbReference type="PDB" id="2ID4"/>
    </source>
</evidence>
<organism>
    <name type="scientific">Saccharomyces cerevisiae (strain ATCC 204508 / S288c)</name>
    <name type="common">Baker's yeast</name>
    <dbReference type="NCBI Taxonomy" id="559292"/>
    <lineage>
        <taxon>Eukaryota</taxon>
        <taxon>Fungi</taxon>
        <taxon>Dikarya</taxon>
        <taxon>Ascomycota</taxon>
        <taxon>Saccharomycotina</taxon>
        <taxon>Saccharomycetes</taxon>
        <taxon>Saccharomycetales</taxon>
        <taxon>Saccharomycetaceae</taxon>
        <taxon>Saccharomyces</taxon>
    </lineage>
</organism>
<sequence length="814" mass="90003">MKVRKYITLCFWWAFSTSALVSSQQIPLKDHTSRQYFAVESNETLSRLEEMHPNWKYEHDVRGLPNHYVFSKELLKLGKRSSLEELQGDNNDHILSVHDLFPRNDLFKRLPVPAPPMDSSLLPVKEAEDKLSINDPLFERQWHLVNPSFPGSDINVLDLWYNNITGAGVVAAIVDDGLDYENEDLKDNFCAEGSWDFNDNTNLPKPRLSDDYHGTRCAGEIAAKKGNNFCGVGVGYNAKISGIRILSGDITTEDEAASLIYGLDVNDIYSCSWGPADDGRHLQGPSDLVKKALVKGVTEGRDSKGAIYVFASGNGGTRGDNCNYDGYTNSIYSITIGAIDHKDLHPPYSEGCSAVMAVTYSSGSGEYIHSSDINGRCSNSHGGTSAAAPLAAGVYTLLLEANPNLTWRDVQYLSILSAVGLEKNADGDWRDSAMGKKYSHRYGFGKIDAHKLIEMSKTWENVNAQTWFYLPTLYVSQSTNSTEETLESVITISEKSLQDANFKRIEHVTVTVDIDTEIRGTTTVDLISPAGIISNLGVVRPRDVSSEGFKDWTFMSVAHWGENGVGDWKIKVKTTENGHRIDFHSWRLKLFGESIDSSKTETFVFGNDKEEVEPAATESTVSQYSASSTSISISATSTSSISIGVETSAIPQTTTASTDPDSDPNTPKKLSSPRQAMHYFLTIFLIGATFLVLYFMFFMKSRRRIRRSRAETYEFDIIDTDSEYDSTLDNGTSGITEPEEVEDFDFDLSDEDHLASLSSSENGDAEHTIDSVLTNENPFSDPIKQKFPNDANAESASNKLQELQPDVPPSSGRS</sequence>